<name>MSHA_GEOOG</name>
<comment type="function">
    <text evidence="1">Catalyzes the transfer of a N-acetyl-glucosamine moiety to 1D-myo-inositol 3-phosphate to produce 1D-myo-inositol 2-acetamido-2-deoxy-glucopyranoside 3-phosphate in the mycothiol biosynthesis pathway.</text>
</comment>
<comment type="catalytic activity">
    <reaction evidence="1">
        <text>1D-myo-inositol 3-phosphate + UDP-N-acetyl-alpha-D-glucosamine = 1D-myo-inositol 2-acetamido-2-deoxy-alpha-D-glucopyranoside 3-phosphate + UDP + H(+)</text>
        <dbReference type="Rhea" id="RHEA:26188"/>
        <dbReference type="ChEBI" id="CHEBI:15378"/>
        <dbReference type="ChEBI" id="CHEBI:57705"/>
        <dbReference type="ChEBI" id="CHEBI:58223"/>
        <dbReference type="ChEBI" id="CHEBI:58401"/>
        <dbReference type="ChEBI" id="CHEBI:58892"/>
        <dbReference type="EC" id="2.4.1.250"/>
    </reaction>
</comment>
<comment type="subunit">
    <text evidence="1">Homodimer.</text>
</comment>
<comment type="similarity">
    <text evidence="1">Belongs to the glycosyltransferase group 1 family. MshA subfamily.</text>
</comment>
<feature type="chain" id="PRO_0000400125" description="D-inositol 3-phosphate glycosyltransferase">
    <location>
        <begin position="1"/>
        <end position="450"/>
    </location>
</feature>
<feature type="binding site" evidence="1">
    <location>
        <position position="21"/>
    </location>
    <ligand>
        <name>1D-myo-inositol 3-phosphate</name>
        <dbReference type="ChEBI" id="CHEBI:58401"/>
    </ligand>
</feature>
<feature type="binding site" evidence="1">
    <location>
        <begin position="27"/>
        <end position="28"/>
    </location>
    <ligand>
        <name>UDP-N-acetyl-alpha-D-glucosamine</name>
        <dbReference type="ChEBI" id="CHEBI:57705"/>
    </ligand>
</feature>
<feature type="binding site" evidence="1">
    <location>
        <begin position="32"/>
        <end position="37"/>
    </location>
    <ligand>
        <name>1D-myo-inositol 3-phosphate</name>
        <dbReference type="ChEBI" id="CHEBI:58401"/>
    </ligand>
</feature>
<feature type="binding site" evidence="1">
    <location>
        <position position="35"/>
    </location>
    <ligand>
        <name>UDP-N-acetyl-alpha-D-glucosamine</name>
        <dbReference type="ChEBI" id="CHEBI:57705"/>
    </ligand>
</feature>
<feature type="binding site" evidence="1">
    <location>
        <position position="90"/>
    </location>
    <ligand>
        <name>1D-myo-inositol 3-phosphate</name>
        <dbReference type="ChEBI" id="CHEBI:58401"/>
    </ligand>
</feature>
<feature type="binding site" evidence="1">
    <location>
        <position position="123"/>
    </location>
    <ligand>
        <name>1D-myo-inositol 3-phosphate</name>
        <dbReference type="ChEBI" id="CHEBI:58401"/>
    </ligand>
</feature>
<feature type="binding site" evidence="1">
    <location>
        <position position="147"/>
    </location>
    <ligand>
        <name>1D-myo-inositol 3-phosphate</name>
        <dbReference type="ChEBI" id="CHEBI:58401"/>
    </ligand>
</feature>
<feature type="binding site" evidence="1">
    <location>
        <position position="167"/>
    </location>
    <ligand>
        <name>1D-myo-inositol 3-phosphate</name>
        <dbReference type="ChEBI" id="CHEBI:58401"/>
    </ligand>
</feature>
<feature type="binding site" evidence="1">
    <location>
        <position position="241"/>
    </location>
    <ligand>
        <name>UDP-N-acetyl-alpha-D-glucosamine</name>
        <dbReference type="ChEBI" id="CHEBI:57705"/>
    </ligand>
</feature>
<feature type="binding site" evidence="1">
    <location>
        <position position="246"/>
    </location>
    <ligand>
        <name>UDP-N-acetyl-alpha-D-glucosamine</name>
        <dbReference type="ChEBI" id="CHEBI:57705"/>
    </ligand>
</feature>
<feature type="binding site" evidence="1">
    <location>
        <position position="307"/>
    </location>
    <ligand>
        <name>UDP-N-acetyl-alpha-D-glucosamine</name>
        <dbReference type="ChEBI" id="CHEBI:57705"/>
    </ligand>
</feature>
<feature type="binding site" evidence="1">
    <location>
        <position position="316"/>
    </location>
    <ligand>
        <name>Mg(2+)</name>
        <dbReference type="ChEBI" id="CHEBI:18420"/>
    </ligand>
</feature>
<feature type="binding site" evidence="1">
    <location>
        <position position="317"/>
    </location>
    <ligand>
        <name>Mg(2+)</name>
        <dbReference type="ChEBI" id="CHEBI:18420"/>
    </ligand>
</feature>
<feature type="binding site" evidence="1">
    <location>
        <position position="319"/>
    </location>
    <ligand>
        <name>Mg(2+)</name>
        <dbReference type="ChEBI" id="CHEBI:18420"/>
    </ligand>
</feature>
<feature type="binding site" evidence="1">
    <location>
        <position position="329"/>
    </location>
    <ligand>
        <name>UDP-N-acetyl-alpha-D-glucosamine</name>
        <dbReference type="ChEBI" id="CHEBI:57705"/>
    </ligand>
</feature>
<feature type="binding site" evidence="1">
    <location>
        <position position="337"/>
    </location>
    <ligand>
        <name>UDP-N-acetyl-alpha-D-glucosamine</name>
        <dbReference type="ChEBI" id="CHEBI:57705"/>
    </ligand>
</feature>
<feature type="binding site" evidence="1">
    <location>
        <position position="343"/>
    </location>
    <ligand>
        <name>Mg(2+)</name>
        <dbReference type="ChEBI" id="CHEBI:18420"/>
    </ligand>
</feature>
<organism>
    <name type="scientific">Geodermatophilus obscurus (strain ATCC 25078 / DSM 43160 / JCM 3152 / CCUG 61914 / KCC A-0152 / KCTC 9177 / NBRC 13315 / NRRL B-3577 / G-20)</name>
    <dbReference type="NCBI Taxonomy" id="526225"/>
    <lineage>
        <taxon>Bacteria</taxon>
        <taxon>Bacillati</taxon>
        <taxon>Actinomycetota</taxon>
        <taxon>Actinomycetes</taxon>
        <taxon>Geodermatophilales</taxon>
        <taxon>Geodermatophilaceae</taxon>
        <taxon>Geodermatophilus</taxon>
    </lineage>
</organism>
<gene>
    <name evidence="1" type="primary">mshA</name>
    <name type="ordered locus">Gobs_4609</name>
</gene>
<evidence type="ECO:0000255" key="1">
    <source>
        <dbReference type="HAMAP-Rule" id="MF_01695"/>
    </source>
</evidence>
<protein>
    <recommendedName>
        <fullName>D-inositol 3-phosphate glycosyltransferase</fullName>
        <ecNumber evidence="1">2.4.1.250</ecNumber>
    </recommendedName>
    <alternativeName>
        <fullName evidence="1">N-acetylglucosamine-inositol-phosphate N-acetylglucosaminyltransferase</fullName>
        <shortName evidence="1">GlcNAc-Ins-P N-acetylglucosaminyltransferase</shortName>
    </alternativeName>
</protein>
<accession>D2S4K7</accession>
<dbReference type="EC" id="2.4.1.250" evidence="1"/>
<dbReference type="EMBL" id="CP001867">
    <property type="protein sequence ID" value="ADB77157.1"/>
    <property type="molecule type" value="Genomic_DNA"/>
</dbReference>
<dbReference type="RefSeq" id="WP_012950581.1">
    <property type="nucleotide sequence ID" value="NC_013757.1"/>
</dbReference>
<dbReference type="SMR" id="D2S4K7"/>
<dbReference type="STRING" id="526225.Gobs_4609"/>
<dbReference type="CAZy" id="GT4">
    <property type="family name" value="Glycosyltransferase Family 4"/>
</dbReference>
<dbReference type="KEGG" id="gob:Gobs_4609"/>
<dbReference type="eggNOG" id="COG0297">
    <property type="taxonomic scope" value="Bacteria"/>
</dbReference>
<dbReference type="HOGENOM" id="CLU_009583_2_3_11"/>
<dbReference type="OrthoDB" id="9810929at2"/>
<dbReference type="Proteomes" id="UP000001382">
    <property type="component" value="Chromosome"/>
</dbReference>
<dbReference type="GO" id="GO:0008375">
    <property type="term" value="F:acetylglucosaminyltransferase activity"/>
    <property type="evidence" value="ECO:0007669"/>
    <property type="project" value="UniProtKB-UniRule"/>
</dbReference>
<dbReference type="GO" id="GO:0102710">
    <property type="term" value="F:D-inositol-3-phosphate glycosyltransferase activity"/>
    <property type="evidence" value="ECO:0007669"/>
    <property type="project" value="UniProtKB-EC"/>
</dbReference>
<dbReference type="GO" id="GO:0000287">
    <property type="term" value="F:magnesium ion binding"/>
    <property type="evidence" value="ECO:0007669"/>
    <property type="project" value="UniProtKB-UniRule"/>
</dbReference>
<dbReference type="GO" id="GO:0010125">
    <property type="term" value="P:mycothiol biosynthetic process"/>
    <property type="evidence" value="ECO:0007669"/>
    <property type="project" value="UniProtKB-UniRule"/>
</dbReference>
<dbReference type="CDD" id="cd03800">
    <property type="entry name" value="GT4_sucrose_synthase"/>
    <property type="match status" value="1"/>
</dbReference>
<dbReference type="Gene3D" id="3.40.50.2000">
    <property type="entry name" value="Glycogen Phosphorylase B"/>
    <property type="match status" value="2"/>
</dbReference>
<dbReference type="HAMAP" id="MF_01695">
    <property type="entry name" value="MshA"/>
    <property type="match status" value="1"/>
</dbReference>
<dbReference type="InterPro" id="IPR001296">
    <property type="entry name" value="Glyco_trans_1"/>
</dbReference>
<dbReference type="InterPro" id="IPR028098">
    <property type="entry name" value="Glyco_trans_4-like_N"/>
</dbReference>
<dbReference type="InterPro" id="IPR017814">
    <property type="entry name" value="Mycothiol_biosynthesis_MshA"/>
</dbReference>
<dbReference type="NCBIfam" id="TIGR03449">
    <property type="entry name" value="mycothiol_MshA"/>
    <property type="match status" value="1"/>
</dbReference>
<dbReference type="PANTHER" id="PTHR12526:SF510">
    <property type="entry name" value="D-INOSITOL 3-PHOSPHATE GLYCOSYLTRANSFERASE"/>
    <property type="match status" value="1"/>
</dbReference>
<dbReference type="PANTHER" id="PTHR12526">
    <property type="entry name" value="GLYCOSYLTRANSFERASE"/>
    <property type="match status" value="1"/>
</dbReference>
<dbReference type="Pfam" id="PF13579">
    <property type="entry name" value="Glyco_trans_4_4"/>
    <property type="match status" value="1"/>
</dbReference>
<dbReference type="Pfam" id="PF00534">
    <property type="entry name" value="Glycos_transf_1"/>
    <property type="match status" value="1"/>
</dbReference>
<dbReference type="SUPFAM" id="SSF53756">
    <property type="entry name" value="UDP-Glycosyltransferase/glycogen phosphorylase"/>
    <property type="match status" value="1"/>
</dbReference>
<keyword id="KW-0328">Glycosyltransferase</keyword>
<keyword id="KW-0460">Magnesium</keyword>
<keyword id="KW-0479">Metal-binding</keyword>
<keyword id="KW-1185">Reference proteome</keyword>
<keyword id="KW-0808">Transferase</keyword>
<proteinExistence type="inferred from homology"/>
<sequence>MAARRRPRSAVPRRVATLSVHTSPLDQPGAGDAGGMNVYVVEVSRRLAERGIAVDVFTRAVSSDLPPVVEMSPGVTVRHVSAGPFEGLGKEELPAQLCAFTAAVLREEAQHEPGHYDVVHSHYWLSGQVGWLARDRWSVPLIHTAHTLAKVKNAALAVGDRPEPRARVIGEEQVVAEADRLVANTADEARQLVDHYGADPRRTLVVPPGVDLDRFTPGDRTAARRRLGVAEDAVVLLFVGRIQPLKAPDLLLEAAARMLADDPALRDRLQVHVVGAPSGTGLEAPRQLEQLAAGLGIADLLRFLPPVHVELLAEHYRAADVAVVPSHNESFGLVALEAQACGTPVVAAAVGGLRTAVRDGVSGVLVEGRDPADYAAAIRAVLARRELLSAGARRHAGAFSWERTVDSLVAAYTAAAEEMAAASQRAVPGTLLRPAWALGGVRALGAQVAR</sequence>
<reference key="1">
    <citation type="submission" date="2010-01" db="EMBL/GenBank/DDBJ databases">
        <title>The complete genome of Geodermatophilus obscurus DSM 43160.</title>
        <authorList>
            <consortium name="US DOE Joint Genome Institute (JGI-PGF)"/>
            <person name="Lucas S."/>
            <person name="Copeland A."/>
            <person name="Lapidus A."/>
            <person name="Glavina del Rio T."/>
            <person name="Dalin E."/>
            <person name="Tice H."/>
            <person name="Bruce D."/>
            <person name="Goodwin L."/>
            <person name="Pitluck S."/>
            <person name="Kyrpides N."/>
            <person name="Mavromatis K."/>
            <person name="Ivanova N."/>
            <person name="Munk A.C."/>
            <person name="Brettin T."/>
            <person name="Detter J.C."/>
            <person name="Han C."/>
            <person name="Larimer F."/>
            <person name="Land M."/>
            <person name="Hauser L."/>
            <person name="Markowitz V."/>
            <person name="Cheng J.-F."/>
            <person name="Hugenholtz P."/>
            <person name="Woyke T."/>
            <person name="Wu D."/>
            <person name="Jando M."/>
            <person name="Schneider S."/>
            <person name="Klenk H.-P."/>
            <person name="Eisen J.A."/>
        </authorList>
    </citation>
    <scope>NUCLEOTIDE SEQUENCE [LARGE SCALE GENOMIC DNA]</scope>
    <source>
        <strain>ATCC 25078 / DSM 43160 / JCM 3152 / CCUG 61914 / KCC A-0152 / KCTC 9177 / NBRC 13315 / NRRL B-3577 / G-20</strain>
    </source>
</reference>